<proteinExistence type="inferred from homology"/>
<organism>
    <name type="scientific">Aspergillus oryzae (strain ATCC 42149 / RIB 40)</name>
    <name type="common">Yellow koji mold</name>
    <dbReference type="NCBI Taxonomy" id="510516"/>
    <lineage>
        <taxon>Eukaryota</taxon>
        <taxon>Fungi</taxon>
        <taxon>Dikarya</taxon>
        <taxon>Ascomycota</taxon>
        <taxon>Pezizomycotina</taxon>
        <taxon>Eurotiomycetes</taxon>
        <taxon>Eurotiomycetidae</taxon>
        <taxon>Eurotiales</taxon>
        <taxon>Aspergillaceae</taxon>
        <taxon>Aspergillus</taxon>
        <taxon>Aspergillus subgen. Circumdati</taxon>
    </lineage>
</organism>
<dbReference type="EMBL" id="BA000050">
    <property type="protein sequence ID" value="BAE57938.1"/>
    <property type="molecule type" value="Genomic_DNA"/>
</dbReference>
<dbReference type="RefSeq" id="XP_001819940.1">
    <property type="nucleotide sequence ID" value="XM_001819888.1"/>
</dbReference>
<dbReference type="SMR" id="Q2UKH7"/>
<dbReference type="STRING" id="510516.Q2UKH7"/>
<dbReference type="EnsemblFungi" id="BAE57938">
    <property type="protein sequence ID" value="BAE57938"/>
    <property type="gene ID" value="AO090003000804"/>
</dbReference>
<dbReference type="GeneID" id="5991923"/>
<dbReference type="KEGG" id="aor:AO090003000804"/>
<dbReference type="VEuPathDB" id="FungiDB:AO090003000804"/>
<dbReference type="HOGENOM" id="CLU_022082_0_0_1"/>
<dbReference type="OMA" id="SERCMPK"/>
<dbReference type="OrthoDB" id="65738at5052"/>
<dbReference type="UniPathway" id="UPA00989"/>
<dbReference type="Proteomes" id="UP000006564">
    <property type="component" value="Chromosome 2"/>
</dbReference>
<dbReference type="GO" id="GO:0005829">
    <property type="term" value="C:cytosol"/>
    <property type="evidence" value="ECO:0007669"/>
    <property type="project" value="TreeGrafter"/>
</dbReference>
<dbReference type="GO" id="GO:0005634">
    <property type="term" value="C:nucleus"/>
    <property type="evidence" value="ECO:0007669"/>
    <property type="project" value="UniProtKB-SubCell"/>
</dbReference>
<dbReference type="GO" id="GO:0043527">
    <property type="term" value="C:tRNA methyltransferase complex"/>
    <property type="evidence" value="ECO:0007669"/>
    <property type="project" value="TreeGrafter"/>
</dbReference>
<dbReference type="GO" id="GO:0106004">
    <property type="term" value="P:tRNA (guanine-N7)-methylation"/>
    <property type="evidence" value="ECO:0007669"/>
    <property type="project" value="UniProtKB-UniRule"/>
</dbReference>
<dbReference type="Gene3D" id="2.130.10.10">
    <property type="entry name" value="YVTN repeat-like/Quinoprotein amine dehydrogenase"/>
    <property type="match status" value="1"/>
</dbReference>
<dbReference type="HAMAP" id="MF_03056">
    <property type="entry name" value="TRM82"/>
    <property type="match status" value="1"/>
</dbReference>
<dbReference type="InterPro" id="IPR028884">
    <property type="entry name" value="Trm82"/>
</dbReference>
<dbReference type="InterPro" id="IPR015943">
    <property type="entry name" value="WD40/YVTN_repeat-like_dom_sf"/>
</dbReference>
<dbReference type="InterPro" id="IPR036322">
    <property type="entry name" value="WD40_repeat_dom_sf"/>
</dbReference>
<dbReference type="PANTHER" id="PTHR16288:SF0">
    <property type="entry name" value="TRNA (GUANINE-N(7)-)-METHYLTRANSFERASE NON-CATALYTIC SUBUNIT WDR4"/>
    <property type="match status" value="1"/>
</dbReference>
<dbReference type="PANTHER" id="PTHR16288">
    <property type="entry name" value="WD40 REPEAT PROTEIN 4"/>
    <property type="match status" value="1"/>
</dbReference>
<dbReference type="SUPFAM" id="SSF50978">
    <property type="entry name" value="WD40 repeat-like"/>
    <property type="match status" value="1"/>
</dbReference>
<gene>
    <name type="primary">trm82</name>
    <name type="ORF">AO090003000804</name>
</gene>
<name>TRM82_ASPOR</name>
<reference key="1">
    <citation type="journal article" date="2005" name="Nature">
        <title>Genome sequencing and analysis of Aspergillus oryzae.</title>
        <authorList>
            <person name="Machida M."/>
            <person name="Asai K."/>
            <person name="Sano M."/>
            <person name="Tanaka T."/>
            <person name="Kumagai T."/>
            <person name="Terai G."/>
            <person name="Kusumoto K."/>
            <person name="Arima T."/>
            <person name="Akita O."/>
            <person name="Kashiwagi Y."/>
            <person name="Abe K."/>
            <person name="Gomi K."/>
            <person name="Horiuchi H."/>
            <person name="Kitamoto K."/>
            <person name="Kobayashi T."/>
            <person name="Takeuchi M."/>
            <person name="Denning D.W."/>
            <person name="Galagan J.E."/>
            <person name="Nierman W.C."/>
            <person name="Yu J."/>
            <person name="Archer D.B."/>
            <person name="Bennett J.W."/>
            <person name="Bhatnagar D."/>
            <person name="Cleveland T.E."/>
            <person name="Fedorova N.D."/>
            <person name="Gotoh O."/>
            <person name="Horikawa H."/>
            <person name="Hosoyama A."/>
            <person name="Ichinomiya M."/>
            <person name="Igarashi R."/>
            <person name="Iwashita K."/>
            <person name="Juvvadi P.R."/>
            <person name="Kato M."/>
            <person name="Kato Y."/>
            <person name="Kin T."/>
            <person name="Kokubun A."/>
            <person name="Maeda H."/>
            <person name="Maeyama N."/>
            <person name="Maruyama J."/>
            <person name="Nagasaki H."/>
            <person name="Nakajima T."/>
            <person name="Oda K."/>
            <person name="Okada K."/>
            <person name="Paulsen I."/>
            <person name="Sakamoto K."/>
            <person name="Sawano T."/>
            <person name="Takahashi M."/>
            <person name="Takase K."/>
            <person name="Terabayashi Y."/>
            <person name="Wortman J.R."/>
            <person name="Yamada O."/>
            <person name="Yamagata Y."/>
            <person name="Anazawa H."/>
            <person name="Hata Y."/>
            <person name="Koide Y."/>
            <person name="Komori T."/>
            <person name="Koyama Y."/>
            <person name="Minetoki T."/>
            <person name="Suharnan S."/>
            <person name="Tanaka A."/>
            <person name="Isono K."/>
            <person name="Kuhara S."/>
            <person name="Ogasawara N."/>
            <person name="Kikuchi H."/>
        </authorList>
    </citation>
    <scope>NUCLEOTIDE SEQUENCE [LARGE SCALE GENOMIC DNA]</scope>
    <source>
        <strain>ATCC 42149 / RIB 40</strain>
    </source>
</reference>
<feature type="chain" id="PRO_0000370515" description="tRNA (guanine-N(7)-)-methyltransferase non-catalytic subunit trm82">
    <location>
        <begin position="1"/>
        <end position="493"/>
    </location>
</feature>
<feature type="repeat" description="WD 1">
    <location>
        <begin position="99"/>
        <end position="139"/>
    </location>
</feature>
<feature type="repeat" description="WD 2">
    <location>
        <begin position="237"/>
        <end position="287"/>
    </location>
</feature>
<feature type="repeat" description="WD 3">
    <location>
        <begin position="289"/>
        <end position="331"/>
    </location>
</feature>
<feature type="region of interest" description="Disordered" evidence="2">
    <location>
        <begin position="46"/>
        <end position="96"/>
    </location>
</feature>
<feature type="compositionally biased region" description="Polar residues" evidence="2">
    <location>
        <begin position="46"/>
        <end position="66"/>
    </location>
</feature>
<keyword id="KW-0539">Nucleus</keyword>
<keyword id="KW-1185">Reference proteome</keyword>
<keyword id="KW-0677">Repeat</keyword>
<keyword id="KW-0819">tRNA processing</keyword>
<keyword id="KW-0853">WD repeat</keyword>
<sequence length="493" mass="54112">MAANFQLPLQCLQYLEKRGAESQRFLIASSGGKIYSYAAETGQRLSSWPQDVDASNANNSKATETETGSEDQAPPEKKRKVSPSEEGPAETSKSTVKASTWSSIPCLVAHSNGDYVIALTAEDKCVRVLRLKDDGTLEQLSERCMPKRPCSIALTDDGNTILCGDKFGDVYSLPLLPGNEPYVAPKLPNRPKVPSATPLTVHSKRNLESLEQQLRYSQKNSTEEKNSLNFQHQLLLGHVSLLTDVAFVTVPQDDNFGKKRSYILTGDRDEHIRVSRYPQAHIIEGYCLGHTAFVTKLCIPQYAPGYLISGGGDDYLLVWKWSEGRILQKVPLVKQESETTQVTVRGIWATSIGGSNIVLVALEGSSNLQCFVLGSDGTLKPQDPIEMSGNVLDVAIMEKDSTIVVSVDCIREKGSTHEWRASPTSPSNLIESFRVKPGTENLEWEPVTESLVTNINMGGSSGIPADADTKQRKELNDVLYSLGNLRKKHGEDD</sequence>
<evidence type="ECO:0000255" key="1">
    <source>
        <dbReference type="HAMAP-Rule" id="MF_03056"/>
    </source>
</evidence>
<evidence type="ECO:0000256" key="2">
    <source>
        <dbReference type="SAM" id="MobiDB-lite"/>
    </source>
</evidence>
<protein>
    <recommendedName>
        <fullName evidence="1">tRNA (guanine-N(7)-)-methyltransferase non-catalytic subunit trm82</fullName>
    </recommendedName>
    <alternativeName>
        <fullName evidence="1">Transfer RNA methyltransferase 82</fullName>
    </alternativeName>
</protein>
<comment type="function">
    <text evidence="1">Required for the formation of N(7)-methylguanine at position 46 (m7G46) in tRNA. In the complex, it is required to stabilize and induce conformational changes of the catalytic subunit.</text>
</comment>
<comment type="pathway">
    <text evidence="1">tRNA modification; N(7)-methylguanine-tRNA biosynthesis.</text>
</comment>
<comment type="subunit">
    <text evidence="1">Forms a heterodimer with the catalytic subunit trm8.</text>
</comment>
<comment type="subcellular location">
    <subcellularLocation>
        <location evidence="1">Nucleus</location>
    </subcellularLocation>
</comment>
<comment type="similarity">
    <text evidence="1">Belongs to the WD repeat TRM82 family.</text>
</comment>
<accession>Q2UKH7</accession>